<dbReference type="EC" id="5.4.99.25" evidence="1"/>
<dbReference type="EMBL" id="CP000716">
    <property type="protein sequence ID" value="ABR30907.1"/>
    <property type="molecule type" value="Genomic_DNA"/>
</dbReference>
<dbReference type="RefSeq" id="WP_012057267.1">
    <property type="nucleotide sequence ID" value="NC_009616.1"/>
</dbReference>
<dbReference type="SMR" id="A6LLV6"/>
<dbReference type="STRING" id="391009.Tmel_1046"/>
<dbReference type="KEGG" id="tme:Tmel_1046"/>
<dbReference type="eggNOG" id="COG0130">
    <property type="taxonomic scope" value="Bacteria"/>
</dbReference>
<dbReference type="HOGENOM" id="CLU_032087_0_2_0"/>
<dbReference type="OrthoDB" id="9802309at2"/>
<dbReference type="Proteomes" id="UP000001110">
    <property type="component" value="Chromosome"/>
</dbReference>
<dbReference type="GO" id="GO:0003723">
    <property type="term" value="F:RNA binding"/>
    <property type="evidence" value="ECO:0007669"/>
    <property type="project" value="InterPro"/>
</dbReference>
<dbReference type="GO" id="GO:0160148">
    <property type="term" value="F:tRNA pseudouridine(55) synthase activity"/>
    <property type="evidence" value="ECO:0007669"/>
    <property type="project" value="UniProtKB-EC"/>
</dbReference>
<dbReference type="GO" id="GO:1990481">
    <property type="term" value="P:mRNA pseudouridine synthesis"/>
    <property type="evidence" value="ECO:0007669"/>
    <property type="project" value="TreeGrafter"/>
</dbReference>
<dbReference type="GO" id="GO:0031119">
    <property type="term" value="P:tRNA pseudouridine synthesis"/>
    <property type="evidence" value="ECO:0007669"/>
    <property type="project" value="UniProtKB-UniRule"/>
</dbReference>
<dbReference type="CDD" id="cd02573">
    <property type="entry name" value="PseudoU_synth_EcTruB"/>
    <property type="match status" value="1"/>
</dbReference>
<dbReference type="Gene3D" id="3.30.2350.10">
    <property type="entry name" value="Pseudouridine synthase"/>
    <property type="match status" value="1"/>
</dbReference>
<dbReference type="Gene3D" id="2.30.130.10">
    <property type="entry name" value="PUA domain"/>
    <property type="match status" value="1"/>
</dbReference>
<dbReference type="HAMAP" id="MF_01080">
    <property type="entry name" value="TruB_bact"/>
    <property type="match status" value="1"/>
</dbReference>
<dbReference type="InterPro" id="IPR020103">
    <property type="entry name" value="PsdUridine_synth_cat_dom_sf"/>
</dbReference>
<dbReference type="InterPro" id="IPR002501">
    <property type="entry name" value="PsdUridine_synth_N"/>
</dbReference>
<dbReference type="InterPro" id="IPR015947">
    <property type="entry name" value="PUA-like_sf"/>
</dbReference>
<dbReference type="InterPro" id="IPR036974">
    <property type="entry name" value="PUA_sf"/>
</dbReference>
<dbReference type="InterPro" id="IPR014780">
    <property type="entry name" value="tRNA_psdUridine_synth_TruB"/>
</dbReference>
<dbReference type="InterPro" id="IPR032819">
    <property type="entry name" value="TruB_C"/>
</dbReference>
<dbReference type="NCBIfam" id="TIGR00431">
    <property type="entry name" value="TruB"/>
    <property type="match status" value="1"/>
</dbReference>
<dbReference type="PANTHER" id="PTHR13767:SF2">
    <property type="entry name" value="PSEUDOURIDYLATE SYNTHASE TRUB1"/>
    <property type="match status" value="1"/>
</dbReference>
<dbReference type="PANTHER" id="PTHR13767">
    <property type="entry name" value="TRNA-PSEUDOURIDINE SYNTHASE"/>
    <property type="match status" value="1"/>
</dbReference>
<dbReference type="Pfam" id="PF16198">
    <property type="entry name" value="TruB_C_2"/>
    <property type="match status" value="1"/>
</dbReference>
<dbReference type="Pfam" id="PF01509">
    <property type="entry name" value="TruB_N"/>
    <property type="match status" value="1"/>
</dbReference>
<dbReference type="SUPFAM" id="SSF55120">
    <property type="entry name" value="Pseudouridine synthase"/>
    <property type="match status" value="1"/>
</dbReference>
<dbReference type="SUPFAM" id="SSF88697">
    <property type="entry name" value="PUA domain-like"/>
    <property type="match status" value="1"/>
</dbReference>
<dbReference type="PROSITE" id="PS50890">
    <property type="entry name" value="PUA"/>
    <property type="match status" value="1"/>
</dbReference>
<organism>
    <name type="scientific">Thermosipho melanesiensis (strain DSM 12029 / CIP 104789 / BI429)</name>
    <dbReference type="NCBI Taxonomy" id="391009"/>
    <lineage>
        <taxon>Bacteria</taxon>
        <taxon>Thermotogati</taxon>
        <taxon>Thermotogota</taxon>
        <taxon>Thermotogae</taxon>
        <taxon>Thermotogales</taxon>
        <taxon>Fervidobacteriaceae</taxon>
        <taxon>Thermosipho</taxon>
    </lineage>
</organism>
<sequence>MMGFLNLYKPKGVTSHDVVDEVRRKLNIRRVGHAGTLDPFAEGVLVVGVGSTTRLLEYLQVERKRYYVKALLGVITETFDITGEIVEERECNIPDERIIDVVKSFVGKYKQVPPAYSAKKYKGERLYKLAREGKIISLPPVDVEIYGIDKIIVKKPHFSFEVEVSKGTYIRSLCMDIGYKLGCGATAKELKRLSVGTFDIRDAINPFEVGREKLLESLIDVQKVLPLPKVEIYKDFVENIYNGNQPTLDFVKEMVDSFSKDDDVMLICNGQLVAIAKAERNSKFLEKNLPRGRIFKLKKVFKEI</sequence>
<protein>
    <recommendedName>
        <fullName evidence="1">tRNA pseudouridine synthase B</fullName>
        <ecNumber evidence="1">5.4.99.25</ecNumber>
    </recommendedName>
    <alternativeName>
        <fullName evidence="1">tRNA pseudouridine(55) synthase</fullName>
        <shortName evidence="1">Psi55 synthase</shortName>
    </alternativeName>
    <alternativeName>
        <fullName evidence="1">tRNA pseudouridylate synthase</fullName>
    </alternativeName>
    <alternativeName>
        <fullName evidence="1">tRNA-uridine isomerase</fullName>
    </alternativeName>
</protein>
<name>TRUB_THEM4</name>
<reference key="1">
    <citation type="submission" date="2007-05" db="EMBL/GenBank/DDBJ databases">
        <title>Complete sequence of Thermosipho melanesiensis BI429.</title>
        <authorList>
            <consortium name="US DOE Joint Genome Institute"/>
            <person name="Copeland A."/>
            <person name="Lucas S."/>
            <person name="Lapidus A."/>
            <person name="Barry K."/>
            <person name="Glavina del Rio T."/>
            <person name="Dalin E."/>
            <person name="Tice H."/>
            <person name="Pitluck S."/>
            <person name="Chertkov O."/>
            <person name="Brettin T."/>
            <person name="Bruce D."/>
            <person name="Detter J.C."/>
            <person name="Han C."/>
            <person name="Schmutz J."/>
            <person name="Larimer F."/>
            <person name="Land M."/>
            <person name="Hauser L."/>
            <person name="Kyrpides N."/>
            <person name="Mikhailova N."/>
            <person name="Nelson K."/>
            <person name="Gogarten J.P."/>
            <person name="Noll K."/>
            <person name="Richardson P."/>
        </authorList>
    </citation>
    <scope>NUCLEOTIDE SEQUENCE [LARGE SCALE GENOMIC DNA]</scope>
    <source>
        <strain>DSM 12029 / CIP 104789 / BI429</strain>
    </source>
</reference>
<keyword id="KW-0413">Isomerase</keyword>
<keyword id="KW-0819">tRNA processing</keyword>
<comment type="function">
    <text evidence="1">Responsible for synthesis of pseudouridine from uracil-55 in the psi GC loop of transfer RNAs.</text>
</comment>
<comment type="catalytic activity">
    <reaction evidence="1">
        <text>uridine(55) in tRNA = pseudouridine(55) in tRNA</text>
        <dbReference type="Rhea" id="RHEA:42532"/>
        <dbReference type="Rhea" id="RHEA-COMP:10101"/>
        <dbReference type="Rhea" id="RHEA-COMP:10102"/>
        <dbReference type="ChEBI" id="CHEBI:65314"/>
        <dbReference type="ChEBI" id="CHEBI:65315"/>
        <dbReference type="EC" id="5.4.99.25"/>
    </reaction>
</comment>
<comment type="similarity">
    <text evidence="1">Belongs to the pseudouridine synthase TruB family. Type 1 subfamily.</text>
</comment>
<feature type="chain" id="PRO_1000084708" description="tRNA pseudouridine synthase B">
    <location>
        <begin position="1"/>
        <end position="304"/>
    </location>
</feature>
<feature type="domain" description="PUA" evidence="1">
    <location>
        <begin position="227"/>
        <end position="302"/>
    </location>
</feature>
<feature type="active site" description="Nucleophile" evidence="1">
    <location>
        <position position="38"/>
    </location>
</feature>
<evidence type="ECO:0000255" key="1">
    <source>
        <dbReference type="HAMAP-Rule" id="MF_01080"/>
    </source>
</evidence>
<accession>A6LLV6</accession>
<proteinExistence type="inferred from homology"/>
<gene>
    <name evidence="1" type="primary">truB</name>
    <name type="ordered locus">Tmel_1046</name>
</gene>